<dbReference type="EMBL" id="AAFI02000201">
    <property type="protein sequence ID" value="EAL60792.1"/>
    <property type="molecule type" value="Genomic_DNA"/>
</dbReference>
<dbReference type="RefSeq" id="XP_629198.1">
    <property type="nucleotide sequence ID" value="XM_629196.1"/>
</dbReference>
<dbReference type="FunCoup" id="Q54BZ3">
    <property type="interactions" value="640"/>
</dbReference>
<dbReference type="PaxDb" id="44689-DDB0266566"/>
<dbReference type="EnsemblProtists" id="EAL60792">
    <property type="protein sequence ID" value="EAL60792"/>
    <property type="gene ID" value="DDB_G0293336"/>
</dbReference>
<dbReference type="GeneID" id="8629157"/>
<dbReference type="KEGG" id="ddi:DDB_G0293336"/>
<dbReference type="dictyBase" id="DDB_G0293336"/>
<dbReference type="VEuPathDB" id="AmoebaDB:DDB_G0293316"/>
<dbReference type="HOGENOM" id="CLU_194865_0_0_1"/>
<dbReference type="InParanoid" id="Q54BZ3"/>
<dbReference type="PhylomeDB" id="Q54BZ3"/>
<dbReference type="PRO" id="PR:Q54BZ3"/>
<dbReference type="Proteomes" id="UP000002195">
    <property type="component" value="Chromosome 6"/>
</dbReference>
<feature type="chain" id="PRO_0000317361" description="UPF0512 protein W">
    <location>
        <begin position="1"/>
        <end position="83"/>
    </location>
</feature>
<evidence type="ECO:0000305" key="1"/>
<reference key="1">
    <citation type="journal article" date="2005" name="Nature">
        <title>The genome of the social amoeba Dictyostelium discoideum.</title>
        <authorList>
            <person name="Eichinger L."/>
            <person name="Pachebat J.A."/>
            <person name="Gloeckner G."/>
            <person name="Rajandream M.A."/>
            <person name="Sucgang R."/>
            <person name="Berriman M."/>
            <person name="Song J."/>
            <person name="Olsen R."/>
            <person name="Szafranski K."/>
            <person name="Xu Q."/>
            <person name="Tunggal B."/>
            <person name="Kummerfeld S."/>
            <person name="Madera M."/>
            <person name="Konfortov B.A."/>
            <person name="Rivero F."/>
            <person name="Bankier A.T."/>
            <person name="Lehmann R."/>
            <person name="Hamlin N."/>
            <person name="Davies R."/>
            <person name="Gaudet P."/>
            <person name="Fey P."/>
            <person name="Pilcher K."/>
            <person name="Chen G."/>
            <person name="Saunders D."/>
            <person name="Sodergren E.J."/>
            <person name="Davis P."/>
            <person name="Kerhornou A."/>
            <person name="Nie X."/>
            <person name="Hall N."/>
            <person name="Anjard C."/>
            <person name="Hemphill L."/>
            <person name="Bason N."/>
            <person name="Farbrother P."/>
            <person name="Desany B."/>
            <person name="Just E."/>
            <person name="Morio T."/>
            <person name="Rost R."/>
            <person name="Churcher C.M."/>
            <person name="Cooper J."/>
            <person name="Haydock S."/>
            <person name="van Driessche N."/>
            <person name="Cronin A."/>
            <person name="Goodhead I."/>
            <person name="Muzny D.M."/>
            <person name="Mourier T."/>
            <person name="Pain A."/>
            <person name="Lu M."/>
            <person name="Harper D."/>
            <person name="Lindsay R."/>
            <person name="Hauser H."/>
            <person name="James K.D."/>
            <person name="Quiles M."/>
            <person name="Madan Babu M."/>
            <person name="Saito T."/>
            <person name="Buchrieser C."/>
            <person name="Wardroper A."/>
            <person name="Felder M."/>
            <person name="Thangavelu M."/>
            <person name="Johnson D."/>
            <person name="Knights A."/>
            <person name="Loulseged H."/>
            <person name="Mungall K.L."/>
            <person name="Oliver K."/>
            <person name="Price C."/>
            <person name="Quail M.A."/>
            <person name="Urushihara H."/>
            <person name="Hernandez J."/>
            <person name="Rabbinowitsch E."/>
            <person name="Steffen D."/>
            <person name="Sanders M."/>
            <person name="Ma J."/>
            <person name="Kohara Y."/>
            <person name="Sharp S."/>
            <person name="Simmonds M.N."/>
            <person name="Spiegler S."/>
            <person name="Tivey A."/>
            <person name="Sugano S."/>
            <person name="White B."/>
            <person name="Walker D."/>
            <person name="Woodward J.R."/>
            <person name="Winckler T."/>
            <person name="Tanaka Y."/>
            <person name="Shaulsky G."/>
            <person name="Schleicher M."/>
            <person name="Weinstock G.M."/>
            <person name="Rosenthal A."/>
            <person name="Cox E.C."/>
            <person name="Chisholm R.L."/>
            <person name="Gibbs R.A."/>
            <person name="Loomis W.F."/>
            <person name="Platzer M."/>
            <person name="Kay R.R."/>
            <person name="Williams J.G."/>
            <person name="Dear P.H."/>
            <person name="Noegel A.A."/>
            <person name="Barrell B.G."/>
            <person name="Kuspa A."/>
        </authorList>
    </citation>
    <scope>NUCLEOTIDE SEQUENCE [LARGE SCALE GENOMIC DNA]</scope>
    <source>
        <strain>AX4</strain>
    </source>
</reference>
<organism>
    <name type="scientific">Dictyostelium discoideum</name>
    <name type="common">Social amoeba</name>
    <dbReference type="NCBI Taxonomy" id="44689"/>
    <lineage>
        <taxon>Eukaryota</taxon>
        <taxon>Amoebozoa</taxon>
        <taxon>Evosea</taxon>
        <taxon>Eumycetozoa</taxon>
        <taxon>Dictyostelia</taxon>
        <taxon>Dictyosteliales</taxon>
        <taxon>Dictyosteliaceae</taxon>
        <taxon>Dictyostelium</taxon>
    </lineage>
</organism>
<gene>
    <name type="ORF">DDB_G0293336</name>
</gene>
<sequence>MTIFNSISSISNPTRTALSSINTYNYNGSSVNDNSTAYFDNDFGGWGGLGNFCNGNGCGGGSSNVNVINLDIDIGSRRHRRCC</sequence>
<comment type="similarity">
    <text evidence="1">Belongs to the UPF0512 family.</text>
</comment>
<protein>
    <recommendedName>
        <fullName>UPF0512 protein W</fullName>
    </recommendedName>
</protein>
<proteinExistence type="inferred from homology"/>
<keyword id="KW-1185">Reference proteome</keyword>
<accession>Q54BZ3</accession>
<name>U512W_DICDI</name>